<reference key="1">
    <citation type="submission" date="2006-03" db="EMBL/GenBank/DDBJ databases">
        <title>Complete sequence of chromosome of Psychrobacter cryohalolentis K5.</title>
        <authorList>
            <consortium name="US DOE Joint Genome Institute"/>
            <person name="Copeland A."/>
            <person name="Lucas S."/>
            <person name="Lapidus A."/>
            <person name="Barry K."/>
            <person name="Detter J.C."/>
            <person name="Glavina T."/>
            <person name="Hammon N."/>
            <person name="Israni S."/>
            <person name="Dalin E."/>
            <person name="Tice H."/>
            <person name="Pitluck S."/>
            <person name="Brettin T."/>
            <person name="Bruce D."/>
            <person name="Han C."/>
            <person name="Tapia R."/>
            <person name="Sims D.R."/>
            <person name="Gilna P."/>
            <person name="Schmutz J."/>
            <person name="Larimer F."/>
            <person name="Land M."/>
            <person name="Hauser L."/>
            <person name="Kyrpides N."/>
            <person name="Kim E."/>
            <person name="Richardson P."/>
        </authorList>
    </citation>
    <scope>NUCLEOTIDE SEQUENCE [LARGE SCALE GENOMIC DNA]</scope>
    <source>
        <strain>ATCC BAA-1226 / DSM 17306 / VKM B-2378 / K5</strain>
    </source>
</reference>
<proteinExistence type="inferred from homology"/>
<evidence type="ECO:0000255" key="1">
    <source>
        <dbReference type="HAMAP-Rule" id="MF_01265"/>
    </source>
</evidence>
<keyword id="KW-0520">NAD</keyword>
<keyword id="KW-0521">NADP</keyword>
<keyword id="KW-0560">Oxidoreductase</keyword>
<keyword id="KW-0662">Pyridine nucleotide biosynthesis</keyword>
<name>ASPD_PSYCK</name>
<accession>Q1QBB6</accession>
<dbReference type="EC" id="1.4.1.21" evidence="1"/>
<dbReference type="EMBL" id="CP000323">
    <property type="protein sequence ID" value="ABE75037.1"/>
    <property type="molecule type" value="Genomic_DNA"/>
</dbReference>
<dbReference type="RefSeq" id="WP_011513589.1">
    <property type="nucleotide sequence ID" value="NC_007969.1"/>
</dbReference>
<dbReference type="SMR" id="Q1QBB6"/>
<dbReference type="STRING" id="335284.Pcryo_1256"/>
<dbReference type="KEGG" id="pcr:Pcryo_1256"/>
<dbReference type="eggNOG" id="COG1712">
    <property type="taxonomic scope" value="Bacteria"/>
</dbReference>
<dbReference type="HOGENOM" id="CLU_089550_0_0_6"/>
<dbReference type="UniPathway" id="UPA00253">
    <property type="reaction ID" value="UER00456"/>
</dbReference>
<dbReference type="Proteomes" id="UP000002425">
    <property type="component" value="Chromosome"/>
</dbReference>
<dbReference type="GO" id="GO:0033735">
    <property type="term" value="F:aspartate dehydrogenase activity"/>
    <property type="evidence" value="ECO:0007669"/>
    <property type="project" value="UniProtKB-EC"/>
</dbReference>
<dbReference type="GO" id="GO:0051287">
    <property type="term" value="F:NAD binding"/>
    <property type="evidence" value="ECO:0007669"/>
    <property type="project" value="UniProtKB-UniRule"/>
</dbReference>
<dbReference type="GO" id="GO:0050661">
    <property type="term" value="F:NADP binding"/>
    <property type="evidence" value="ECO:0007669"/>
    <property type="project" value="UniProtKB-UniRule"/>
</dbReference>
<dbReference type="GO" id="GO:0016639">
    <property type="term" value="F:oxidoreductase activity, acting on the CH-NH2 group of donors, NAD or NADP as acceptor"/>
    <property type="evidence" value="ECO:0007669"/>
    <property type="project" value="UniProtKB-UniRule"/>
</dbReference>
<dbReference type="GO" id="GO:0009435">
    <property type="term" value="P:NAD biosynthetic process"/>
    <property type="evidence" value="ECO:0007669"/>
    <property type="project" value="UniProtKB-UniRule"/>
</dbReference>
<dbReference type="Gene3D" id="3.30.360.10">
    <property type="entry name" value="Dihydrodipicolinate Reductase, domain 2"/>
    <property type="match status" value="1"/>
</dbReference>
<dbReference type="Gene3D" id="3.40.50.720">
    <property type="entry name" value="NAD(P)-binding Rossmann-like Domain"/>
    <property type="match status" value="1"/>
</dbReference>
<dbReference type="HAMAP" id="MF_01265">
    <property type="entry name" value="NadX"/>
    <property type="match status" value="1"/>
</dbReference>
<dbReference type="InterPro" id="IPR005106">
    <property type="entry name" value="Asp/hSer_DH_NAD-bd"/>
</dbReference>
<dbReference type="InterPro" id="IPR002811">
    <property type="entry name" value="Asp_DH"/>
</dbReference>
<dbReference type="InterPro" id="IPR020626">
    <property type="entry name" value="Asp_DH_prok"/>
</dbReference>
<dbReference type="InterPro" id="IPR011182">
    <property type="entry name" value="L-Asp_DH"/>
</dbReference>
<dbReference type="InterPro" id="IPR036291">
    <property type="entry name" value="NAD(P)-bd_dom_sf"/>
</dbReference>
<dbReference type="NCBIfam" id="NF009828">
    <property type="entry name" value="PRK13303.1-3"/>
    <property type="match status" value="1"/>
</dbReference>
<dbReference type="PANTHER" id="PTHR31873:SF6">
    <property type="entry name" value="ASPARTATE DEHYDROGENASE DOMAIN-CONTAINING PROTEIN"/>
    <property type="match status" value="1"/>
</dbReference>
<dbReference type="PANTHER" id="PTHR31873">
    <property type="entry name" value="L-ASPARTATE DEHYDROGENASE-RELATED"/>
    <property type="match status" value="1"/>
</dbReference>
<dbReference type="Pfam" id="PF01958">
    <property type="entry name" value="Asp_DH_C"/>
    <property type="match status" value="1"/>
</dbReference>
<dbReference type="Pfam" id="PF03447">
    <property type="entry name" value="NAD_binding_3"/>
    <property type="match status" value="1"/>
</dbReference>
<dbReference type="PIRSF" id="PIRSF005227">
    <property type="entry name" value="Asp_dh_NAD_syn"/>
    <property type="match status" value="1"/>
</dbReference>
<dbReference type="SUPFAM" id="SSF55347">
    <property type="entry name" value="Glyceraldehyde-3-phosphate dehydrogenase-like, C-terminal domain"/>
    <property type="match status" value="1"/>
</dbReference>
<dbReference type="SUPFAM" id="SSF51735">
    <property type="entry name" value="NAD(P)-binding Rossmann-fold domains"/>
    <property type="match status" value="1"/>
</dbReference>
<feature type="chain" id="PRO_1000067311" description="L-aspartate dehydrogenase">
    <location>
        <begin position="1"/>
        <end position="263"/>
    </location>
</feature>
<feature type="active site" evidence="1">
    <location>
        <position position="216"/>
    </location>
</feature>
<feature type="binding site" evidence="1">
    <location>
        <position position="120"/>
    </location>
    <ligand>
        <name>NAD(+)</name>
        <dbReference type="ChEBI" id="CHEBI:57540"/>
    </ligand>
</feature>
<feature type="binding site" evidence="1">
    <location>
        <position position="186"/>
    </location>
    <ligand>
        <name>NAD(+)</name>
        <dbReference type="ChEBI" id="CHEBI:57540"/>
    </ligand>
</feature>
<comment type="function">
    <text evidence="1">Specifically catalyzes the NAD or NADP-dependent dehydrogenation of L-aspartate to iminoaspartate.</text>
</comment>
<comment type="catalytic activity">
    <reaction evidence="1">
        <text>L-aspartate + NADP(+) + H2O = oxaloacetate + NH4(+) + NADPH + H(+)</text>
        <dbReference type="Rhea" id="RHEA:11784"/>
        <dbReference type="ChEBI" id="CHEBI:15377"/>
        <dbReference type="ChEBI" id="CHEBI:15378"/>
        <dbReference type="ChEBI" id="CHEBI:16452"/>
        <dbReference type="ChEBI" id="CHEBI:28938"/>
        <dbReference type="ChEBI" id="CHEBI:29991"/>
        <dbReference type="ChEBI" id="CHEBI:57783"/>
        <dbReference type="ChEBI" id="CHEBI:58349"/>
        <dbReference type="EC" id="1.4.1.21"/>
    </reaction>
</comment>
<comment type="catalytic activity">
    <reaction evidence="1">
        <text>L-aspartate + NAD(+) + H2O = oxaloacetate + NH4(+) + NADH + H(+)</text>
        <dbReference type="Rhea" id="RHEA:11788"/>
        <dbReference type="ChEBI" id="CHEBI:15377"/>
        <dbReference type="ChEBI" id="CHEBI:15378"/>
        <dbReference type="ChEBI" id="CHEBI:16452"/>
        <dbReference type="ChEBI" id="CHEBI:28938"/>
        <dbReference type="ChEBI" id="CHEBI:29991"/>
        <dbReference type="ChEBI" id="CHEBI:57540"/>
        <dbReference type="ChEBI" id="CHEBI:57945"/>
        <dbReference type="EC" id="1.4.1.21"/>
    </reaction>
</comment>
<comment type="pathway">
    <text evidence="1">Cofactor biosynthesis; NAD(+) biosynthesis; iminoaspartate from L-aspartate (dehydrogenase route): step 1/1.</text>
</comment>
<comment type="miscellaneous">
    <text evidence="1">The iminoaspartate product is unstable in aqueous solution and can decompose to oxaloacetate and ammonia.</text>
</comment>
<comment type="similarity">
    <text evidence="1">Belongs to the L-aspartate dehydrogenase family.</text>
</comment>
<gene>
    <name evidence="1" type="primary">nadX</name>
    <name type="ordered locus">Pcryo_1256</name>
</gene>
<sequence length="263" mass="27858">MKNVMFIGYGSMARKVHEMLPKNIILSTVLVSTRSAEIIKTELGESIAVITSVDDLIETPDLAVEMSGQDGLKEHAIKILGKSIPLGIISVGAFTDEKFAISLADTAEANGVEIHILAGAVAGIDGIHAASFAGLSDVVYQGKKHPSSWKGSHADRLIDYDNLVEPTVFFTGTAREAAALFPDNSNVAATIAIAGVGLDDTTVELIADPTLEYNIHHIMAKGVFGKLEISMAGLPLVENPKTSSLAAFSALRLCCQIDQVIQM</sequence>
<organism>
    <name type="scientific">Psychrobacter cryohalolentis (strain ATCC BAA-1226 / DSM 17306 / VKM B-2378 / K5)</name>
    <dbReference type="NCBI Taxonomy" id="335284"/>
    <lineage>
        <taxon>Bacteria</taxon>
        <taxon>Pseudomonadati</taxon>
        <taxon>Pseudomonadota</taxon>
        <taxon>Gammaproteobacteria</taxon>
        <taxon>Moraxellales</taxon>
        <taxon>Moraxellaceae</taxon>
        <taxon>Psychrobacter</taxon>
    </lineage>
</organism>
<protein>
    <recommendedName>
        <fullName evidence="1">L-aspartate dehydrogenase</fullName>
        <ecNumber evidence="1">1.4.1.21</ecNumber>
    </recommendedName>
</protein>